<organism>
    <name type="scientific">Lycaon pictus</name>
    <name type="common">African wild dog</name>
    <name type="synonym">Cape hunting dog</name>
    <dbReference type="NCBI Taxonomy" id="9622"/>
    <lineage>
        <taxon>Eukaryota</taxon>
        <taxon>Metazoa</taxon>
        <taxon>Chordata</taxon>
        <taxon>Craniata</taxon>
        <taxon>Vertebrata</taxon>
        <taxon>Euteleostomi</taxon>
        <taxon>Mammalia</taxon>
        <taxon>Eutheria</taxon>
        <taxon>Laurasiatheria</taxon>
        <taxon>Carnivora</taxon>
        <taxon>Caniformia</taxon>
        <taxon>Canidae</taxon>
        <taxon>Lycaon</taxon>
    </lineage>
</organism>
<accession>Q3BCR5</accession>
<feature type="chain" id="PRO_0000220103" description="Thiopurine S-methyltransferase">
    <location>
        <begin position="1"/>
        <end position="245"/>
    </location>
</feature>
<feature type="binding site" evidence="1">
    <location>
        <begin position="29"/>
        <end position="40"/>
    </location>
    <ligand>
        <name>S-adenosyl-L-methionine</name>
        <dbReference type="ChEBI" id="CHEBI:59789"/>
    </ligand>
</feature>
<feature type="binding site" evidence="1">
    <location>
        <position position="40"/>
    </location>
    <ligand>
        <name>substrate</name>
    </ligand>
</feature>
<feature type="binding site" evidence="1">
    <location>
        <position position="69"/>
    </location>
    <ligand>
        <name>S-adenosyl-L-methionine</name>
        <dbReference type="ChEBI" id="CHEBI:59789"/>
    </ligand>
</feature>
<feature type="binding site" evidence="1">
    <location>
        <position position="90"/>
    </location>
    <ligand>
        <name>S-adenosyl-L-methionine</name>
        <dbReference type="ChEBI" id="CHEBI:59789"/>
    </ligand>
</feature>
<feature type="binding site" evidence="1">
    <location>
        <position position="152"/>
    </location>
    <ligand>
        <name>S-adenosyl-L-methionine</name>
        <dbReference type="ChEBI" id="CHEBI:59789"/>
    </ligand>
</feature>
<feature type="modified residue" description="N6-acetyllysine" evidence="2">
    <location>
        <position position="58"/>
    </location>
</feature>
<reference key="1">
    <citation type="journal article" date="2005" name="Pharmacogenet. Genomics">
        <title>Thiopurine S-methyltransferase pharmacogenetics: variant allele functional and comparative genomics.</title>
        <authorList>
            <person name="Salavaggione O.E."/>
            <person name="Wang L."/>
            <person name="Wiepert M."/>
            <person name="Yee V.C."/>
            <person name="Weinshilboum R.M."/>
        </authorList>
    </citation>
    <scope>NUCLEOTIDE SEQUENCE [MRNA]</scope>
</reference>
<keyword id="KW-0007">Acetylation</keyword>
<keyword id="KW-0963">Cytoplasm</keyword>
<keyword id="KW-0489">Methyltransferase</keyword>
<keyword id="KW-0949">S-adenosyl-L-methionine</keyword>
<keyword id="KW-0808">Transferase</keyword>
<sequence>MDKTRTFLDVKEYPDTEVQKNRVLTLEEWQEKWVSRRIGFHQEQGHKLLKKHLDTFLKGENGLRVFFPLCGKAVEMKWFADRGHSVVGVEISELGIREFFAEQNLSYTEEPIVEIPGGKIFKSSSGNISLYCCSLFDLPRANIGKFDRIWDRGALVAINPGDRECYADIMLSLTRKGFHYLLAVLCYDPTKHAGPPFYVPEAEIKKLFGSICNIHCLEKVDVFEEQHKSWGIDYIIEKLYLFTEK</sequence>
<protein>
    <recommendedName>
        <fullName>Thiopurine S-methyltransferase</fullName>
        <ecNumber>2.1.1.67</ecNumber>
    </recommendedName>
    <alternativeName>
        <fullName>Thiopurine methyltransferase</fullName>
    </alternativeName>
</protein>
<comment type="catalytic activity">
    <reaction evidence="2">
        <text>S-adenosyl-L-methionine + a thiopurine = S-adenosyl-L-homocysteine + a thiopurine S-methylether.</text>
        <dbReference type="EC" id="2.1.1.67"/>
    </reaction>
</comment>
<comment type="subunit">
    <text evidence="2">Monomer.</text>
</comment>
<comment type="subcellular location">
    <subcellularLocation>
        <location>Cytoplasm</location>
    </subcellularLocation>
</comment>
<comment type="similarity">
    <text evidence="3">Belongs to the class I-like SAM-binding methyltransferase superfamily. TPMT family.</text>
</comment>
<dbReference type="EC" id="2.1.1.67"/>
<dbReference type="EMBL" id="AY827077">
    <property type="protein sequence ID" value="AAX37641.1"/>
    <property type="molecule type" value="mRNA"/>
</dbReference>
<dbReference type="SMR" id="Q3BCR5"/>
<dbReference type="GO" id="GO:0005737">
    <property type="term" value="C:cytoplasm"/>
    <property type="evidence" value="ECO:0007669"/>
    <property type="project" value="UniProtKB-SubCell"/>
</dbReference>
<dbReference type="GO" id="GO:0008119">
    <property type="term" value="F:thiopurine S-methyltransferase activity"/>
    <property type="evidence" value="ECO:0007669"/>
    <property type="project" value="UniProtKB-EC"/>
</dbReference>
<dbReference type="GO" id="GO:0032259">
    <property type="term" value="P:methylation"/>
    <property type="evidence" value="ECO:0007669"/>
    <property type="project" value="UniProtKB-KW"/>
</dbReference>
<dbReference type="FunFam" id="3.40.50.150:FF:000101">
    <property type="entry name" value="Thiopurine S-methyltransferase"/>
    <property type="match status" value="1"/>
</dbReference>
<dbReference type="Gene3D" id="3.40.50.150">
    <property type="entry name" value="Vaccinia Virus protein VP39"/>
    <property type="match status" value="1"/>
</dbReference>
<dbReference type="HAMAP" id="MF_00812">
    <property type="entry name" value="Thiopur_methtran"/>
    <property type="match status" value="1"/>
</dbReference>
<dbReference type="InterPro" id="IPR029063">
    <property type="entry name" value="SAM-dependent_MTases_sf"/>
</dbReference>
<dbReference type="InterPro" id="IPR025835">
    <property type="entry name" value="Thiopurine_S-MeTrfase"/>
</dbReference>
<dbReference type="InterPro" id="IPR008854">
    <property type="entry name" value="TPMT"/>
</dbReference>
<dbReference type="PANTHER" id="PTHR10259">
    <property type="entry name" value="THIOPURINE S-METHYLTRANSFERASE"/>
    <property type="match status" value="1"/>
</dbReference>
<dbReference type="PANTHER" id="PTHR10259:SF11">
    <property type="entry name" value="THIOPURINE S-METHYLTRANSFERASE"/>
    <property type="match status" value="1"/>
</dbReference>
<dbReference type="Pfam" id="PF05724">
    <property type="entry name" value="TPMT"/>
    <property type="match status" value="1"/>
</dbReference>
<dbReference type="PIRSF" id="PIRSF023956">
    <property type="entry name" value="Thiopurine_S-methyltransferase"/>
    <property type="match status" value="1"/>
</dbReference>
<dbReference type="SUPFAM" id="SSF53335">
    <property type="entry name" value="S-adenosyl-L-methionine-dependent methyltransferases"/>
    <property type="match status" value="1"/>
</dbReference>
<dbReference type="PROSITE" id="PS51585">
    <property type="entry name" value="SAM_MT_TPMT"/>
    <property type="match status" value="1"/>
</dbReference>
<name>TPMT_LYCPI</name>
<gene>
    <name type="primary">TPMT</name>
</gene>
<proteinExistence type="evidence at transcript level"/>
<evidence type="ECO:0000250" key="1"/>
<evidence type="ECO:0000250" key="2">
    <source>
        <dbReference type="UniProtKB" id="P51580"/>
    </source>
</evidence>
<evidence type="ECO:0000305" key="3"/>